<keyword id="KW-1185">Reference proteome</keyword>
<accession>Q9FYJ1</accession>
<accession>F4I7U6</accession>
<reference key="1">
    <citation type="journal article" date="2000" name="Nature">
        <title>Sequence and analysis of chromosome 1 of the plant Arabidopsis thaliana.</title>
        <authorList>
            <person name="Theologis A."/>
            <person name="Ecker J.R."/>
            <person name="Palm C.J."/>
            <person name="Federspiel N.A."/>
            <person name="Kaul S."/>
            <person name="White O."/>
            <person name="Alonso J."/>
            <person name="Altafi H."/>
            <person name="Araujo R."/>
            <person name="Bowman C.L."/>
            <person name="Brooks S.Y."/>
            <person name="Buehler E."/>
            <person name="Chan A."/>
            <person name="Chao Q."/>
            <person name="Chen H."/>
            <person name="Cheuk R.F."/>
            <person name="Chin C.W."/>
            <person name="Chung M.K."/>
            <person name="Conn L."/>
            <person name="Conway A.B."/>
            <person name="Conway A.R."/>
            <person name="Creasy T.H."/>
            <person name="Dewar K."/>
            <person name="Dunn P."/>
            <person name="Etgu P."/>
            <person name="Feldblyum T.V."/>
            <person name="Feng J.-D."/>
            <person name="Fong B."/>
            <person name="Fujii C.Y."/>
            <person name="Gill J.E."/>
            <person name="Goldsmith A.D."/>
            <person name="Haas B."/>
            <person name="Hansen N.F."/>
            <person name="Hughes B."/>
            <person name="Huizar L."/>
            <person name="Hunter J.L."/>
            <person name="Jenkins J."/>
            <person name="Johnson-Hopson C."/>
            <person name="Khan S."/>
            <person name="Khaykin E."/>
            <person name="Kim C.J."/>
            <person name="Koo H.L."/>
            <person name="Kremenetskaia I."/>
            <person name="Kurtz D.B."/>
            <person name="Kwan A."/>
            <person name="Lam B."/>
            <person name="Langin-Hooper S."/>
            <person name="Lee A."/>
            <person name="Lee J.M."/>
            <person name="Lenz C.A."/>
            <person name="Li J.H."/>
            <person name="Li Y.-P."/>
            <person name="Lin X."/>
            <person name="Liu S.X."/>
            <person name="Liu Z.A."/>
            <person name="Luros J.S."/>
            <person name="Maiti R."/>
            <person name="Marziali A."/>
            <person name="Militscher J."/>
            <person name="Miranda M."/>
            <person name="Nguyen M."/>
            <person name="Nierman W.C."/>
            <person name="Osborne B.I."/>
            <person name="Pai G."/>
            <person name="Peterson J."/>
            <person name="Pham P.K."/>
            <person name="Rizzo M."/>
            <person name="Rooney T."/>
            <person name="Rowley D."/>
            <person name="Sakano H."/>
            <person name="Salzberg S.L."/>
            <person name="Schwartz J.R."/>
            <person name="Shinn P."/>
            <person name="Southwick A.M."/>
            <person name="Sun H."/>
            <person name="Tallon L.J."/>
            <person name="Tambunga G."/>
            <person name="Toriumi M.J."/>
            <person name="Town C.D."/>
            <person name="Utterback T."/>
            <person name="Van Aken S."/>
            <person name="Vaysberg M."/>
            <person name="Vysotskaia V.S."/>
            <person name="Walker M."/>
            <person name="Wu D."/>
            <person name="Yu G."/>
            <person name="Fraser C.M."/>
            <person name="Venter J.C."/>
            <person name="Davis R.W."/>
        </authorList>
    </citation>
    <scope>NUCLEOTIDE SEQUENCE [LARGE SCALE GENOMIC DNA]</scope>
    <source>
        <strain>cv. Columbia</strain>
    </source>
</reference>
<reference key="2">
    <citation type="journal article" date="2017" name="Plant J.">
        <title>Araport11: a complete reannotation of the Arabidopsis thaliana reference genome.</title>
        <authorList>
            <person name="Cheng C.Y."/>
            <person name="Krishnakumar V."/>
            <person name="Chan A.P."/>
            <person name="Thibaud-Nissen F."/>
            <person name="Schobel S."/>
            <person name="Town C.D."/>
        </authorList>
    </citation>
    <scope>GENOME REANNOTATION</scope>
    <source>
        <strain>cv. Columbia</strain>
    </source>
</reference>
<proteinExistence type="predicted"/>
<organism>
    <name type="scientific">Arabidopsis thaliana</name>
    <name type="common">Mouse-ear cress</name>
    <dbReference type="NCBI Taxonomy" id="3702"/>
    <lineage>
        <taxon>Eukaryota</taxon>
        <taxon>Viridiplantae</taxon>
        <taxon>Streptophyta</taxon>
        <taxon>Embryophyta</taxon>
        <taxon>Tracheophyta</taxon>
        <taxon>Spermatophyta</taxon>
        <taxon>Magnoliopsida</taxon>
        <taxon>eudicotyledons</taxon>
        <taxon>Gunneridae</taxon>
        <taxon>Pentapetalae</taxon>
        <taxon>rosids</taxon>
        <taxon>malvids</taxon>
        <taxon>Brassicales</taxon>
        <taxon>Brassicaceae</taxon>
        <taxon>Camelineae</taxon>
        <taxon>Arabidopsis</taxon>
    </lineage>
</organism>
<feature type="chain" id="PRO_0000283300" description="Putative F-box protein At1g31000">
    <location>
        <begin position="1"/>
        <end position="365"/>
    </location>
</feature>
<feature type="domain" description="F-box">
    <location>
        <begin position="15"/>
        <end position="62"/>
    </location>
</feature>
<protein>
    <recommendedName>
        <fullName>Putative F-box protein At1g31000</fullName>
    </recommendedName>
</protein>
<dbReference type="EMBL" id="AC000107">
    <property type="protein sequence ID" value="AAF98183.1"/>
    <property type="molecule type" value="Genomic_DNA"/>
</dbReference>
<dbReference type="EMBL" id="CP002684">
    <property type="protein sequence ID" value="AEE31305.2"/>
    <property type="molecule type" value="Genomic_DNA"/>
</dbReference>
<dbReference type="RefSeq" id="NP_174386.2">
    <property type="nucleotide sequence ID" value="NM_102838.2"/>
</dbReference>
<dbReference type="SMR" id="Q9FYJ1"/>
<dbReference type="FunCoup" id="Q9FYJ1">
    <property type="interactions" value="24"/>
</dbReference>
<dbReference type="STRING" id="3702.Q9FYJ1"/>
<dbReference type="PaxDb" id="3702-AT1G31000.1"/>
<dbReference type="EnsemblPlants" id="AT1G31000.1">
    <property type="protein sequence ID" value="AT1G31000.1"/>
    <property type="gene ID" value="AT1G31000"/>
</dbReference>
<dbReference type="GeneID" id="839986"/>
<dbReference type="Gramene" id="AT1G31000.1">
    <property type="protein sequence ID" value="AT1G31000.1"/>
    <property type="gene ID" value="AT1G31000"/>
</dbReference>
<dbReference type="KEGG" id="ath:AT1G31000"/>
<dbReference type="Araport" id="AT1G31000"/>
<dbReference type="TAIR" id="AT1G31000"/>
<dbReference type="eggNOG" id="ENOG502SXXQ">
    <property type="taxonomic scope" value="Eukaryota"/>
</dbReference>
<dbReference type="HOGENOM" id="CLU_027176_8_1_1"/>
<dbReference type="InParanoid" id="Q9FYJ1"/>
<dbReference type="OMA" id="SERMNDY"/>
<dbReference type="PhylomeDB" id="Q9FYJ1"/>
<dbReference type="PRO" id="PR:Q9FYJ1"/>
<dbReference type="Proteomes" id="UP000006548">
    <property type="component" value="Chromosome 1"/>
</dbReference>
<dbReference type="ExpressionAtlas" id="Q9FYJ1">
    <property type="expression patterns" value="differential"/>
</dbReference>
<dbReference type="InterPro" id="IPR013187">
    <property type="entry name" value="F-box-assoc_dom_typ3"/>
</dbReference>
<dbReference type="InterPro" id="IPR017451">
    <property type="entry name" value="F-box-assoc_interact_dom"/>
</dbReference>
<dbReference type="InterPro" id="IPR036047">
    <property type="entry name" value="F-box-like_dom_sf"/>
</dbReference>
<dbReference type="InterPro" id="IPR001810">
    <property type="entry name" value="F-box_dom"/>
</dbReference>
<dbReference type="InterPro" id="IPR011043">
    <property type="entry name" value="Gal_Oxase/kelch_b-propeller"/>
</dbReference>
<dbReference type="NCBIfam" id="TIGR01640">
    <property type="entry name" value="F_box_assoc_1"/>
    <property type="match status" value="1"/>
</dbReference>
<dbReference type="PANTHER" id="PTHR31111">
    <property type="entry name" value="BNAA05G37150D PROTEIN-RELATED"/>
    <property type="match status" value="1"/>
</dbReference>
<dbReference type="PANTHER" id="PTHR31111:SF138">
    <property type="entry name" value="F-BOX ASSOCIATED DOMAIN-CONTAINING PROTEIN"/>
    <property type="match status" value="1"/>
</dbReference>
<dbReference type="Pfam" id="PF00646">
    <property type="entry name" value="F-box"/>
    <property type="match status" value="1"/>
</dbReference>
<dbReference type="Pfam" id="PF08268">
    <property type="entry name" value="FBA_3"/>
    <property type="match status" value="1"/>
</dbReference>
<dbReference type="SUPFAM" id="SSF81383">
    <property type="entry name" value="F-box domain"/>
    <property type="match status" value="1"/>
</dbReference>
<dbReference type="SUPFAM" id="SSF50965">
    <property type="entry name" value="Galactose oxidase, central domain"/>
    <property type="match status" value="1"/>
</dbReference>
<name>FB24_ARATH</name>
<sequence>MRMTRRRTKKTEIRNDSDSVRIDIVIEIVKRLPLKDVSRFLLVSKLWSEIIRSPYFIRSFPFLFSSIQPHLLYALNSLDKDKGHHKCCDIHYVSGLICFGYGQQQLITNPRTGKSIYLPKVKSRSKIIQSFFGYDPVYGQYKVLCMSERMNDYLNVPSSEHQVFTLGGVQKVEQSWRMIECNIHHRPKTNSVCMDGVLYYGAFTGGDMLEWCLMRFDVRTEKLDLVSRLNESSIQCYRPGHSPSLIKYHGKVALAFETSLHTFELWVMEDAEKWSKIRFSICHSMHLFGQDDDDAFLITGNIHTGEIIFAPYDCDVRFGMTHVVYYDLKTNRLRFRTVAFDLGTLFPQISVMVPFFDYVESAMLL</sequence>
<gene>
    <name type="ordered locus">At1g31000</name>
    <name type="ORF">F17F8.8</name>
</gene>